<evidence type="ECO:0000255" key="1"/>
<evidence type="ECO:0000255" key="2">
    <source>
        <dbReference type="PROSITE-ProRule" id="PRU00274"/>
    </source>
</evidence>
<evidence type="ECO:0000269" key="3">
    <source>
    </source>
</evidence>
<evidence type="ECO:0000269" key="4">
    <source>
    </source>
</evidence>
<evidence type="ECO:0000269" key="5">
    <source ref="1"/>
</evidence>
<evidence type="ECO:0000305" key="6"/>
<evidence type="ECO:0000305" key="7">
    <source>
    </source>
</evidence>
<evidence type="ECO:0000305" key="8">
    <source ref="1"/>
</evidence>
<evidence type="ECO:0007744" key="9">
    <source>
        <dbReference type="PDB" id="3S69"/>
    </source>
</evidence>
<evidence type="ECO:0007829" key="10">
    <source>
        <dbReference type="PDB" id="3S69"/>
    </source>
</evidence>
<comment type="function">
    <text evidence="3">Thrombin-like snake venom serine protease that shows strong blood coagulation activity in vitro.</text>
</comment>
<comment type="subunit">
    <text evidence="5">Monomer.</text>
</comment>
<comment type="subcellular location">
    <subcellularLocation>
        <location>Secreted</location>
    </subcellularLocation>
</comment>
<comment type="tissue specificity">
    <text>Expressed by the venom gland.</text>
</comment>
<comment type="similarity">
    <text evidence="2">Belongs to the peptidase S1 family. Snake venom subfamily.</text>
</comment>
<name>VSPSX_GLOIT</name>
<sequence length="258" mass="28172">MVLIRVLANLLILQLSYAQKSSELVIGGDECNINEHRSLVAFFNSTGFFCSGTLINEEWVLTAAHCDNTNFQMKLGVHSKKVLNEDEQTRNPKEKFICPNKKNDEVLDKDIMLIKLDSRVSNSEHIVPLSLPSSPPSVGSVCHIMGWGSITPIKVTYPDVPYCAYINLLDDAVCQAGYPELLTEYRTLCAGILEGGKDTCGGDSGGPLICNGQFQGIVSFGAHPCGQGLKPGVYTKVFDYNHWIQSIIAGNTTVTCPQ</sequence>
<keyword id="KW-0002">3D-structure</keyword>
<keyword id="KW-1204">Blood coagulation cascade activating toxin</keyword>
<keyword id="KW-1015">Disulfide bond</keyword>
<keyword id="KW-0325">Glycoprotein</keyword>
<keyword id="KW-1199">Hemostasis impairing toxin</keyword>
<keyword id="KW-0378">Hydrolase</keyword>
<keyword id="KW-0645">Protease</keyword>
<keyword id="KW-0964">Secreted</keyword>
<keyword id="KW-0720">Serine protease</keyword>
<keyword id="KW-0732">Signal</keyword>
<keyword id="KW-0800">Toxin</keyword>
<keyword id="KW-0865">Zymogen</keyword>
<reference key="1">
    <citation type="journal article" date="2003" name="Dong Wu Xue Bao">
        <title>Purification, cDNA cloning and sequence analysis of thrombin-like enzyme from Gloydius saxatilis.</title>
        <authorList>
            <person name="Sun D.J."/>
            <person name="Yang C.W."/>
            <person name="Yang T.S."/>
            <person name="Yan W.Q."/>
            <person name="Wang W."/>
        </authorList>
    </citation>
    <scope>NUCLEOTIDE SEQUENCE [MRNA]</scope>
    <scope>SUBUNIT</scope>
    <source>
        <tissue>Venom</tissue>
        <tissue>Venom gland</tissue>
    </source>
</reference>
<reference key="2">
    <citation type="journal article" date="2007" name="Acta Crystallogr. F">
        <title>Purification, crystallization and preliminary X-ray diffraction analysis of saxthrombin, a thrombin-like enzyme from Gloydius saxatilis venom.</title>
        <authorList>
            <person name="Wei W."/>
            <person name="Zhao W."/>
            <person name="Wang X."/>
            <person name="Teng M."/>
            <person name="Niu L."/>
        </authorList>
    </citation>
    <scope>FUNCTION</scope>
    <scope>CRYSTALLIZATION</scope>
    <source>
        <tissue>Venom</tissue>
    </source>
</reference>
<reference key="3">
    <citation type="journal article" date="2011" name="Acta Crystallogr. F">
        <title>Structure of saxthrombin, a thrombin-like enzyme from Gloydius saxatilis.</title>
        <authorList>
            <person name="Huang K."/>
            <person name="Zhao W."/>
            <person name="Gao Y."/>
            <person name="Wei W."/>
            <person name="Teng M."/>
            <person name="Niu L."/>
        </authorList>
    </citation>
    <scope>X-RAY CRYSTALLOGRAPHY (1.43 ANGSTROMS)</scope>
    <scope>DISULFIDE BOND</scope>
    <scope>ACTIVE SITES</scope>
    <source>
        <tissue>Venom</tissue>
    </source>
</reference>
<proteinExistence type="evidence at protein level"/>
<feature type="signal peptide" evidence="1">
    <location>
        <begin position="1"/>
        <end position="18"/>
    </location>
</feature>
<feature type="propeptide" id="PRO_0000296366" evidence="6">
    <location>
        <begin position="19"/>
        <end position="24"/>
    </location>
</feature>
<feature type="chain" id="PRO_0000296367" description="Thrombin-like enzyme saxthrombin" evidence="7 8">
    <location>
        <begin position="25"/>
        <end position="258"/>
    </location>
</feature>
<feature type="domain" description="Peptidase S1" evidence="2">
    <location>
        <begin position="25"/>
        <end position="249"/>
    </location>
</feature>
<feature type="active site" description="Charge relay system" evidence="4">
    <location>
        <position position="65"/>
    </location>
</feature>
<feature type="active site" description="Charge relay system" evidence="4">
    <location>
        <position position="110"/>
    </location>
</feature>
<feature type="active site" description="Charge relay system" evidence="4">
    <location>
        <position position="204"/>
    </location>
</feature>
<feature type="glycosylation site" description="N-linked (GlcNAc...) asparagine" evidence="1">
    <location>
        <position position="44"/>
    </location>
</feature>
<feature type="glycosylation site" description="N-linked (GlcNAc...) asparagine" evidence="1">
    <location>
        <position position="251"/>
    </location>
</feature>
<feature type="disulfide bond" evidence="4 9">
    <location>
        <begin position="31"/>
        <end position="163"/>
    </location>
</feature>
<feature type="disulfide bond" evidence="2 4 9">
    <location>
        <begin position="50"/>
        <end position="66"/>
    </location>
</feature>
<feature type="disulfide bond" evidence="4 9">
    <location>
        <begin position="98"/>
        <end position="256"/>
    </location>
</feature>
<feature type="disulfide bond" evidence="2 4 9">
    <location>
        <begin position="142"/>
        <end position="210"/>
    </location>
</feature>
<feature type="disulfide bond" evidence="2 4 9">
    <location>
        <begin position="174"/>
        <end position="189"/>
    </location>
</feature>
<feature type="disulfide bond" evidence="2 4 9">
    <location>
        <begin position="200"/>
        <end position="225"/>
    </location>
</feature>
<feature type="strand" evidence="10">
    <location>
        <begin position="39"/>
        <end position="43"/>
    </location>
</feature>
<feature type="strand" evidence="10">
    <location>
        <begin position="48"/>
        <end position="56"/>
    </location>
</feature>
<feature type="strand" evidence="10">
    <location>
        <begin position="59"/>
        <end position="62"/>
    </location>
</feature>
<feature type="helix" evidence="10">
    <location>
        <begin position="64"/>
        <end position="66"/>
    </location>
</feature>
<feature type="strand" evidence="10">
    <location>
        <begin position="72"/>
        <end position="76"/>
    </location>
</feature>
<feature type="strand" evidence="10">
    <location>
        <begin position="80"/>
        <end position="82"/>
    </location>
</feature>
<feature type="strand" evidence="10">
    <location>
        <begin position="88"/>
        <end position="90"/>
    </location>
</feature>
<feature type="strand" evidence="10">
    <location>
        <begin position="92"/>
        <end position="97"/>
    </location>
</feature>
<feature type="strand" evidence="10">
    <location>
        <begin position="112"/>
        <end position="118"/>
    </location>
</feature>
<feature type="strand" evidence="10">
    <location>
        <begin position="141"/>
        <end position="148"/>
    </location>
</feature>
<feature type="strand" evidence="10">
    <location>
        <begin position="150"/>
        <end position="154"/>
    </location>
</feature>
<feature type="strand" evidence="10">
    <location>
        <begin position="162"/>
        <end position="169"/>
    </location>
</feature>
<feature type="helix" evidence="10">
    <location>
        <begin position="171"/>
        <end position="177"/>
    </location>
</feature>
<feature type="strand" evidence="10">
    <location>
        <begin position="187"/>
        <end position="191"/>
    </location>
</feature>
<feature type="strand" evidence="10">
    <location>
        <begin position="207"/>
        <end position="210"/>
    </location>
</feature>
<feature type="strand" evidence="10">
    <location>
        <begin position="213"/>
        <end position="220"/>
    </location>
</feature>
<feature type="strand" evidence="10">
    <location>
        <begin position="232"/>
        <end position="236"/>
    </location>
</feature>
<feature type="helix" evidence="10">
    <location>
        <begin position="237"/>
        <end position="240"/>
    </location>
</feature>
<feature type="helix" evidence="10">
    <location>
        <begin position="241"/>
        <end position="249"/>
    </location>
</feature>
<protein>
    <recommendedName>
        <fullName>Thrombin-like enzyme saxthrombin</fullName>
        <shortName>SVTLE</shortName>
        <ecNumber>3.4.21.-</ecNumber>
    </recommendedName>
    <alternativeName>
        <fullName>Fibrinogen-clotting enzyme</fullName>
    </alternativeName>
    <alternativeName>
        <fullName>Snake venom serine protease</fullName>
        <shortName>SVSP</shortName>
    </alternativeName>
    <alternativeName>
        <fullName>Thrombin-like enzyme defibrase</fullName>
    </alternativeName>
</protein>
<accession>Q7SZE1</accession>
<dbReference type="EC" id="3.4.21.-"/>
<dbReference type="EMBL" id="AY204243">
    <property type="protein sequence ID" value="AAP20638.1"/>
    <property type="molecule type" value="mRNA"/>
</dbReference>
<dbReference type="PDB" id="3S69">
    <property type="method" value="X-ray"/>
    <property type="resolution" value="1.43 A"/>
    <property type="chains" value="A=25-258"/>
</dbReference>
<dbReference type="PDBsum" id="3S69"/>
<dbReference type="SMR" id="Q7SZE1"/>
<dbReference type="MEROPS" id="S01.347"/>
<dbReference type="EvolutionaryTrace" id="Q7SZE1"/>
<dbReference type="GO" id="GO:0005576">
    <property type="term" value="C:extracellular region"/>
    <property type="evidence" value="ECO:0007669"/>
    <property type="project" value="UniProtKB-SubCell"/>
</dbReference>
<dbReference type="GO" id="GO:0030141">
    <property type="term" value="C:secretory granule"/>
    <property type="evidence" value="ECO:0007669"/>
    <property type="project" value="TreeGrafter"/>
</dbReference>
<dbReference type="GO" id="GO:0004252">
    <property type="term" value="F:serine-type endopeptidase activity"/>
    <property type="evidence" value="ECO:0007669"/>
    <property type="project" value="InterPro"/>
</dbReference>
<dbReference type="GO" id="GO:0090729">
    <property type="term" value="F:toxin activity"/>
    <property type="evidence" value="ECO:0007669"/>
    <property type="project" value="UniProtKB-KW"/>
</dbReference>
<dbReference type="GO" id="GO:0006508">
    <property type="term" value="P:proteolysis"/>
    <property type="evidence" value="ECO:0007669"/>
    <property type="project" value="UniProtKB-KW"/>
</dbReference>
<dbReference type="CDD" id="cd00190">
    <property type="entry name" value="Tryp_SPc"/>
    <property type="match status" value="1"/>
</dbReference>
<dbReference type="FunFam" id="2.40.10.10:FF:000158">
    <property type="entry name" value="Thrombin-like enzyme saxthrombin"/>
    <property type="match status" value="1"/>
</dbReference>
<dbReference type="FunFam" id="2.40.10.10:FF:000153">
    <property type="entry name" value="Venom plasminogen activator TSV-PA"/>
    <property type="match status" value="1"/>
</dbReference>
<dbReference type="Gene3D" id="2.40.10.10">
    <property type="entry name" value="Trypsin-like serine proteases"/>
    <property type="match status" value="2"/>
</dbReference>
<dbReference type="InterPro" id="IPR009003">
    <property type="entry name" value="Peptidase_S1_PA"/>
</dbReference>
<dbReference type="InterPro" id="IPR043504">
    <property type="entry name" value="Peptidase_S1_PA_chymotrypsin"/>
</dbReference>
<dbReference type="InterPro" id="IPR001314">
    <property type="entry name" value="Peptidase_S1A"/>
</dbReference>
<dbReference type="InterPro" id="IPR001254">
    <property type="entry name" value="Trypsin_dom"/>
</dbReference>
<dbReference type="InterPro" id="IPR018114">
    <property type="entry name" value="TRYPSIN_HIS"/>
</dbReference>
<dbReference type="InterPro" id="IPR033116">
    <property type="entry name" value="TRYPSIN_SER"/>
</dbReference>
<dbReference type="PANTHER" id="PTHR24271:SF47">
    <property type="entry name" value="KALLIKREIN-1"/>
    <property type="match status" value="1"/>
</dbReference>
<dbReference type="PANTHER" id="PTHR24271">
    <property type="entry name" value="KALLIKREIN-RELATED"/>
    <property type="match status" value="1"/>
</dbReference>
<dbReference type="Pfam" id="PF00089">
    <property type="entry name" value="Trypsin"/>
    <property type="match status" value="1"/>
</dbReference>
<dbReference type="PRINTS" id="PR00722">
    <property type="entry name" value="CHYMOTRYPSIN"/>
</dbReference>
<dbReference type="SMART" id="SM00020">
    <property type="entry name" value="Tryp_SPc"/>
    <property type="match status" value="1"/>
</dbReference>
<dbReference type="SUPFAM" id="SSF50494">
    <property type="entry name" value="Trypsin-like serine proteases"/>
    <property type="match status" value="1"/>
</dbReference>
<dbReference type="PROSITE" id="PS50240">
    <property type="entry name" value="TRYPSIN_DOM"/>
    <property type="match status" value="1"/>
</dbReference>
<dbReference type="PROSITE" id="PS00134">
    <property type="entry name" value="TRYPSIN_HIS"/>
    <property type="match status" value="1"/>
</dbReference>
<dbReference type="PROSITE" id="PS00135">
    <property type="entry name" value="TRYPSIN_SER"/>
    <property type="match status" value="1"/>
</dbReference>
<organism>
    <name type="scientific">Gloydius intermedius</name>
    <name type="common">Central Asian pit viper</name>
    <name type="synonym">Agkistrodon intermedius</name>
    <dbReference type="NCBI Taxonomy" id="44732"/>
    <lineage>
        <taxon>Eukaryota</taxon>
        <taxon>Metazoa</taxon>
        <taxon>Chordata</taxon>
        <taxon>Craniata</taxon>
        <taxon>Vertebrata</taxon>
        <taxon>Euteleostomi</taxon>
        <taxon>Lepidosauria</taxon>
        <taxon>Squamata</taxon>
        <taxon>Bifurcata</taxon>
        <taxon>Unidentata</taxon>
        <taxon>Episquamata</taxon>
        <taxon>Toxicofera</taxon>
        <taxon>Serpentes</taxon>
        <taxon>Colubroidea</taxon>
        <taxon>Viperidae</taxon>
        <taxon>Crotalinae</taxon>
        <taxon>Gloydius</taxon>
    </lineage>
</organism>